<organism>
    <name type="scientific">Mus musculus</name>
    <name type="common">Mouse</name>
    <dbReference type="NCBI Taxonomy" id="10090"/>
    <lineage>
        <taxon>Eukaryota</taxon>
        <taxon>Metazoa</taxon>
        <taxon>Chordata</taxon>
        <taxon>Craniata</taxon>
        <taxon>Vertebrata</taxon>
        <taxon>Euteleostomi</taxon>
        <taxon>Mammalia</taxon>
        <taxon>Eutheria</taxon>
        <taxon>Euarchontoglires</taxon>
        <taxon>Glires</taxon>
        <taxon>Rodentia</taxon>
        <taxon>Myomorpha</taxon>
        <taxon>Muroidea</taxon>
        <taxon>Muridae</taxon>
        <taxon>Murinae</taxon>
        <taxon>Mus</taxon>
        <taxon>Mus</taxon>
    </lineage>
</organism>
<name>SNX17_MOUSE</name>
<dbReference type="EMBL" id="AK077650">
    <property type="protein sequence ID" value="BAC36927.1"/>
    <property type="molecule type" value="mRNA"/>
</dbReference>
<dbReference type="EMBL" id="AK077780">
    <property type="protein sequence ID" value="BAC37004.1"/>
    <property type="molecule type" value="mRNA"/>
</dbReference>
<dbReference type="EMBL" id="AK156299">
    <property type="protein sequence ID" value="BAE33663.1"/>
    <property type="molecule type" value="mRNA"/>
</dbReference>
<dbReference type="EMBL" id="BC026571">
    <property type="protein sequence ID" value="AAH26571.1"/>
    <property type="molecule type" value="mRNA"/>
</dbReference>
<dbReference type="EMBL" id="BC023732">
    <property type="protein sequence ID" value="AAH23732.1"/>
    <property type="molecule type" value="mRNA"/>
</dbReference>
<dbReference type="CCDS" id="CCDS19177.1"/>
<dbReference type="RefSeq" id="NP_710147.1">
    <property type="nucleotide sequence ID" value="NM_153680.3"/>
</dbReference>
<dbReference type="BMRB" id="Q8BVL3"/>
<dbReference type="SMR" id="Q8BVL3"/>
<dbReference type="BioGRID" id="234470">
    <property type="interactions" value="3"/>
</dbReference>
<dbReference type="FunCoup" id="Q8BVL3">
    <property type="interactions" value="2991"/>
</dbReference>
<dbReference type="IntAct" id="Q8BVL3">
    <property type="interactions" value="1"/>
</dbReference>
<dbReference type="STRING" id="10090.ENSMUSP00000031029"/>
<dbReference type="iPTMnet" id="Q8BVL3"/>
<dbReference type="PhosphoSitePlus" id="Q8BVL3"/>
<dbReference type="SwissPalm" id="Q8BVL3"/>
<dbReference type="jPOST" id="Q8BVL3"/>
<dbReference type="PaxDb" id="10090-ENSMUSP00000031029"/>
<dbReference type="PeptideAtlas" id="Q8BVL3"/>
<dbReference type="ProteomicsDB" id="261466"/>
<dbReference type="Pumba" id="Q8BVL3"/>
<dbReference type="Antibodypedia" id="28444">
    <property type="antibodies" value="165 antibodies from 26 providers"/>
</dbReference>
<dbReference type="DNASU" id="266781"/>
<dbReference type="Ensembl" id="ENSMUST00000031029.15">
    <property type="protein sequence ID" value="ENSMUSP00000031029.9"/>
    <property type="gene ID" value="ENSMUSG00000029146.15"/>
</dbReference>
<dbReference type="GeneID" id="266781"/>
<dbReference type="KEGG" id="mmu:266781"/>
<dbReference type="UCSC" id="uc008wxm.1">
    <property type="organism name" value="mouse"/>
</dbReference>
<dbReference type="AGR" id="MGI:2387801"/>
<dbReference type="CTD" id="9784"/>
<dbReference type="MGI" id="MGI:2387801">
    <property type="gene designation" value="Snx17"/>
</dbReference>
<dbReference type="VEuPathDB" id="HostDB:ENSMUSG00000029146"/>
<dbReference type="eggNOG" id="KOG3784">
    <property type="taxonomic scope" value="Eukaryota"/>
</dbReference>
<dbReference type="GeneTree" id="ENSGT00950000183212"/>
<dbReference type="HOGENOM" id="CLU_041342_1_0_1"/>
<dbReference type="InParanoid" id="Q8BVL3"/>
<dbReference type="OMA" id="RRHCVGV"/>
<dbReference type="OrthoDB" id="5772781at2759"/>
<dbReference type="PhylomeDB" id="Q8BVL3"/>
<dbReference type="TreeFam" id="TF318398"/>
<dbReference type="BioGRID-ORCS" id="266781">
    <property type="hits" value="7 hits in 79 CRISPR screens"/>
</dbReference>
<dbReference type="ChiTaRS" id="Snx17">
    <property type="organism name" value="mouse"/>
</dbReference>
<dbReference type="PRO" id="PR:Q8BVL3"/>
<dbReference type="Proteomes" id="UP000000589">
    <property type="component" value="Chromosome 5"/>
</dbReference>
<dbReference type="RNAct" id="Q8BVL3">
    <property type="molecule type" value="protein"/>
</dbReference>
<dbReference type="Bgee" id="ENSMUSG00000029146">
    <property type="expression patterns" value="Expressed in medial ganglionic eminence and 252 other cell types or tissues"/>
</dbReference>
<dbReference type="ExpressionAtlas" id="Q8BVL3">
    <property type="expression patterns" value="baseline and differential"/>
</dbReference>
<dbReference type="GO" id="GO:0005737">
    <property type="term" value="C:cytoplasm"/>
    <property type="evidence" value="ECO:0000314"/>
    <property type="project" value="MGI"/>
</dbReference>
<dbReference type="GO" id="GO:0031410">
    <property type="term" value="C:cytoplasmic vesicle"/>
    <property type="evidence" value="ECO:0000250"/>
    <property type="project" value="UniProtKB"/>
</dbReference>
<dbReference type="GO" id="GO:0005829">
    <property type="term" value="C:cytosol"/>
    <property type="evidence" value="ECO:0000250"/>
    <property type="project" value="UniProtKB"/>
</dbReference>
<dbReference type="GO" id="GO:0005769">
    <property type="term" value="C:early endosome"/>
    <property type="evidence" value="ECO:0007669"/>
    <property type="project" value="UniProtKB-SubCell"/>
</dbReference>
<dbReference type="GO" id="GO:0005768">
    <property type="term" value="C:endosome"/>
    <property type="evidence" value="ECO:0000353"/>
    <property type="project" value="MGI"/>
</dbReference>
<dbReference type="GO" id="GO:0010008">
    <property type="term" value="C:endosome membrane"/>
    <property type="evidence" value="ECO:0000266"/>
    <property type="project" value="MGI"/>
</dbReference>
<dbReference type="GO" id="GO:0005794">
    <property type="term" value="C:Golgi apparatus"/>
    <property type="evidence" value="ECO:0007669"/>
    <property type="project" value="Ensembl"/>
</dbReference>
<dbReference type="GO" id="GO:0032991">
    <property type="term" value="C:protein-containing complex"/>
    <property type="evidence" value="ECO:0000266"/>
    <property type="project" value="MGI"/>
</dbReference>
<dbReference type="GO" id="GO:0050750">
    <property type="term" value="F:low-density lipoprotein particle receptor binding"/>
    <property type="evidence" value="ECO:0007669"/>
    <property type="project" value="Ensembl"/>
</dbReference>
<dbReference type="GO" id="GO:0035091">
    <property type="term" value="F:phosphatidylinositol binding"/>
    <property type="evidence" value="ECO:0000250"/>
    <property type="project" value="UniProtKB"/>
</dbReference>
<dbReference type="GO" id="GO:0035904">
    <property type="term" value="P:aorta development"/>
    <property type="evidence" value="ECO:0000315"/>
    <property type="project" value="MGI"/>
</dbReference>
<dbReference type="GO" id="GO:0003279">
    <property type="term" value="P:cardiac septum development"/>
    <property type="evidence" value="ECO:0000315"/>
    <property type="project" value="MGI"/>
</dbReference>
<dbReference type="GO" id="GO:0060976">
    <property type="term" value="P:coronary vasculature development"/>
    <property type="evidence" value="ECO:0000315"/>
    <property type="project" value="MGI"/>
</dbReference>
<dbReference type="GO" id="GO:0032456">
    <property type="term" value="P:endocytic recycling"/>
    <property type="evidence" value="ECO:0000250"/>
    <property type="project" value="UniProtKB"/>
</dbReference>
<dbReference type="GO" id="GO:0001822">
    <property type="term" value="P:kidney development"/>
    <property type="evidence" value="ECO:0000315"/>
    <property type="project" value="MGI"/>
</dbReference>
<dbReference type="GO" id="GO:0015031">
    <property type="term" value="P:protein transport"/>
    <property type="evidence" value="ECO:0007669"/>
    <property type="project" value="UniProtKB-KW"/>
</dbReference>
<dbReference type="GO" id="GO:0006898">
    <property type="term" value="P:receptor-mediated endocytosis"/>
    <property type="evidence" value="ECO:0000314"/>
    <property type="project" value="MGI"/>
</dbReference>
<dbReference type="GO" id="GO:0007165">
    <property type="term" value="P:signal transduction"/>
    <property type="evidence" value="ECO:0007669"/>
    <property type="project" value="InterPro"/>
</dbReference>
<dbReference type="CDD" id="cd13337">
    <property type="entry name" value="FERM-like_C_SNX17"/>
    <property type="match status" value="1"/>
</dbReference>
<dbReference type="CDD" id="cd16121">
    <property type="entry name" value="FERM_F1_SNX17"/>
    <property type="match status" value="1"/>
</dbReference>
<dbReference type="CDD" id="cd06885">
    <property type="entry name" value="PX_SNX17_31"/>
    <property type="match status" value="1"/>
</dbReference>
<dbReference type="FunFam" id="1.20.80.60:FF:000001">
    <property type="entry name" value="Sorting nexin-17 isoform1"/>
    <property type="match status" value="1"/>
</dbReference>
<dbReference type="FunFam" id="2.30.29.30:FF:000145">
    <property type="entry name" value="Sorting nexin-17 isoform1"/>
    <property type="match status" value="1"/>
</dbReference>
<dbReference type="FunFam" id="3.10.20.90:FF:000094">
    <property type="entry name" value="Sorting nexin-17 isoform1"/>
    <property type="match status" value="1"/>
</dbReference>
<dbReference type="FunFam" id="3.30.1520.10:FF:000008">
    <property type="entry name" value="Sorting nexin-17 isoform1"/>
    <property type="match status" value="1"/>
</dbReference>
<dbReference type="Gene3D" id="1.20.80.60">
    <property type="match status" value="1"/>
</dbReference>
<dbReference type="Gene3D" id="3.10.20.90">
    <property type="entry name" value="Phosphatidylinositol 3-kinase Catalytic Subunit, Chain A, domain 1"/>
    <property type="match status" value="1"/>
</dbReference>
<dbReference type="Gene3D" id="3.30.1520.10">
    <property type="entry name" value="Phox-like domain"/>
    <property type="match status" value="1"/>
</dbReference>
<dbReference type="Gene3D" id="2.30.29.30">
    <property type="entry name" value="Pleckstrin-homology domain (PH domain)/Phosphotyrosine-binding domain (PTB)"/>
    <property type="match status" value="1"/>
</dbReference>
<dbReference type="InterPro" id="IPR011993">
    <property type="entry name" value="PH-like_dom_sf"/>
</dbReference>
<dbReference type="InterPro" id="IPR001683">
    <property type="entry name" value="PX_dom"/>
</dbReference>
<dbReference type="InterPro" id="IPR036871">
    <property type="entry name" value="PX_dom_sf"/>
</dbReference>
<dbReference type="InterPro" id="IPR000159">
    <property type="entry name" value="RA_dom"/>
</dbReference>
<dbReference type="InterPro" id="IPR048763">
    <property type="entry name" value="SNX17-31_FERM_F1"/>
</dbReference>
<dbReference type="InterPro" id="IPR048767">
    <property type="entry name" value="SNX17-31_FERM_F2"/>
</dbReference>
<dbReference type="InterPro" id="IPR040842">
    <property type="entry name" value="SNX17/31_FERM"/>
</dbReference>
<dbReference type="InterPro" id="IPR037836">
    <property type="entry name" value="SNX17_FERM-like_dom"/>
</dbReference>
<dbReference type="InterPro" id="IPR028666">
    <property type="entry name" value="SNX17_FERM_N"/>
</dbReference>
<dbReference type="PANTHER" id="PTHR12431">
    <property type="entry name" value="SORTING NEXIN 17 AND 27"/>
    <property type="match status" value="1"/>
</dbReference>
<dbReference type="PANTHER" id="PTHR12431:SF16">
    <property type="entry name" value="SORTING NEXIN-17"/>
    <property type="match status" value="1"/>
</dbReference>
<dbReference type="Pfam" id="PF00787">
    <property type="entry name" value="PX"/>
    <property type="match status" value="1"/>
</dbReference>
<dbReference type="Pfam" id="PF21273">
    <property type="entry name" value="SNX17-27-31_F1_FERM"/>
    <property type="match status" value="1"/>
</dbReference>
<dbReference type="Pfam" id="PF21271">
    <property type="entry name" value="SNX17-31_F2_FERM"/>
    <property type="match status" value="1"/>
</dbReference>
<dbReference type="Pfam" id="PF18116">
    <property type="entry name" value="SNX17_FERM_C"/>
    <property type="match status" value="1"/>
</dbReference>
<dbReference type="SMART" id="SM00312">
    <property type="entry name" value="PX"/>
    <property type="match status" value="1"/>
</dbReference>
<dbReference type="SUPFAM" id="SSF64268">
    <property type="entry name" value="PX domain"/>
    <property type="match status" value="1"/>
</dbReference>
<dbReference type="PROSITE" id="PS50195">
    <property type="entry name" value="PX"/>
    <property type="match status" value="1"/>
</dbReference>
<dbReference type="PROSITE" id="PS50200">
    <property type="entry name" value="RA"/>
    <property type="match status" value="1"/>
</dbReference>
<keyword id="KW-0963">Cytoplasm</keyword>
<keyword id="KW-0968">Cytoplasmic vesicle</keyword>
<keyword id="KW-0967">Endosome</keyword>
<keyword id="KW-0446">Lipid-binding</keyword>
<keyword id="KW-0472">Membrane</keyword>
<keyword id="KW-0597">Phosphoprotein</keyword>
<keyword id="KW-0653">Protein transport</keyword>
<keyword id="KW-1185">Reference proteome</keyword>
<keyword id="KW-0813">Transport</keyword>
<gene>
    <name type="primary">Snx17</name>
</gene>
<comment type="function">
    <text evidence="2 6 7 8">Critical regulator of endosomal recycling of numerous surface proteins, including integrins, signaling receptor and channels (PubMed:12169628, PubMed:16052210). Binds to NPxY sequences in the cytoplasmic tails of target cargos (By similarity). Associates with retriever and CCC complexes to prevent lysosomal degradation and promote cell surface recycling of numerous cargos such as integrins ITGB1, ITGB5 and their associated alpha subunits (By similarity). Also required for maintenance of normal cell surface levels of APP and LRP1 (PubMed:16052210, PubMed:18276590). Interacts with membranes containing phosphatidylinositol 3-phosphate (PtdIns(3P)) (By similarity).</text>
</comment>
<comment type="subunit">
    <text evidence="2 6 7 8 9">Monomer (By similarity). Interacts with APP (via cytoplasmic YXNPXY motif) (PubMed:18276590). Interacts with KIF1B (PubMed:19967056). Interacts with the C-termini of P-selectin, PTC, LDLR, VLDLR, LRP1 and LRP8 (By similarity). Interacts with KRIT1 (via N-terminus) (PubMed:12169628, PubMed:16052210). Interacts with HRAS (By similarity). Interacts with ITGB1 and ITGB5 (via NPxY motif) (By similarity). Interacts with CCDC22 and CCDC93; the interaction associates SNX17 with the CCC complex (By similarity). Interacts (via C-terminus) with VPS26C and VPS35L; the interactions are direct and associate SNX17 with the retriever complex (By similarity).</text>
</comment>
<comment type="subcellular location">
    <subcellularLocation>
        <location evidence="2">Cytoplasm</location>
    </subcellularLocation>
    <subcellularLocation>
        <location evidence="2">Early endosome</location>
    </subcellularLocation>
    <subcellularLocation>
        <location evidence="2">Cytoplasmic vesicle membrane</location>
        <topology evidence="2">Peripheral membrane protein</topology>
        <orientation evidence="2">Cytoplasmic side</orientation>
    </subcellularLocation>
</comment>
<comment type="tissue specificity">
    <text evidence="6 8">Detected in brain neurons (at protein level). Broadly expressed, with highest levels in brain and placenta, and lowest levels in colon, intestine and liver.</text>
</comment>
<comment type="domain">
    <text evidence="2">The PX domain mediates specific binding to phosphatidylinositol 3-phosphate (PtdIns(P3)). Required for association with endosomes.</text>
</comment>
<comment type="domain">
    <text evidence="2">The PTB-like F3 module within the FERM-like domain mediates cargo recognition via their NPxY sequences, while the F1 module (Ras-associating) is responsible for interaction with membrane-bound HRAS.</text>
</comment>
<comment type="similarity">
    <text evidence="10">Belongs to the sorting nexin family.</text>
</comment>
<evidence type="ECO:0000250" key="1"/>
<evidence type="ECO:0000250" key="2">
    <source>
        <dbReference type="UniProtKB" id="Q15036"/>
    </source>
</evidence>
<evidence type="ECO:0000255" key="3">
    <source>
        <dbReference type="PROSITE-ProRule" id="PRU00147"/>
    </source>
</evidence>
<evidence type="ECO:0000255" key="4">
    <source>
        <dbReference type="PROSITE-ProRule" id="PRU00166"/>
    </source>
</evidence>
<evidence type="ECO:0000256" key="5">
    <source>
        <dbReference type="SAM" id="MobiDB-lite"/>
    </source>
</evidence>
<evidence type="ECO:0000269" key="6">
    <source>
    </source>
</evidence>
<evidence type="ECO:0000269" key="7">
    <source>
    </source>
</evidence>
<evidence type="ECO:0000269" key="8">
    <source>
    </source>
</evidence>
<evidence type="ECO:0000269" key="9">
    <source>
    </source>
</evidence>
<evidence type="ECO:0000305" key="10"/>
<evidence type="ECO:0007744" key="11">
    <source>
    </source>
</evidence>
<evidence type="ECO:0007744" key="12">
    <source>
    </source>
</evidence>
<feature type="chain" id="PRO_0000236205" description="Sorting nexin-17">
    <location>
        <begin position="1"/>
        <end position="470"/>
    </location>
</feature>
<feature type="domain" description="PX" evidence="3">
    <location>
        <begin position="1"/>
        <end position="109"/>
    </location>
</feature>
<feature type="domain" description="Ras-associating" evidence="4">
    <location>
        <begin position="115"/>
        <end position="206"/>
    </location>
</feature>
<feature type="region of interest" description="FERM-like" evidence="1">
    <location>
        <begin position="115"/>
        <end position="432"/>
    </location>
</feature>
<feature type="region of interest" description="PTB-like F3 module" evidence="1">
    <location>
        <begin position="270"/>
        <end position="432"/>
    </location>
</feature>
<feature type="region of interest" description="Disordered" evidence="5">
    <location>
        <begin position="401"/>
        <end position="426"/>
    </location>
</feature>
<feature type="binding site" evidence="1">
    <location>
        <position position="36"/>
    </location>
    <ligand>
        <name>a 1,2-diacyl-sn-glycero-3-phospho-(1D-myo-inositol-3-phosphate)</name>
        <dbReference type="ChEBI" id="CHEBI:58088"/>
    </ligand>
</feature>
<feature type="binding site" evidence="1">
    <location>
        <position position="38"/>
    </location>
    <ligand>
        <name>a 1,2-diacyl-sn-glycero-3-phospho-(1D-myo-inositol-3-phosphate)</name>
        <dbReference type="ChEBI" id="CHEBI:58088"/>
    </ligand>
</feature>
<feature type="binding site" evidence="1">
    <location>
        <position position="62"/>
    </location>
    <ligand>
        <name>a 1,2-diacyl-sn-glycero-3-phospho-(1D-myo-inositol-3-phosphate)</name>
        <dbReference type="ChEBI" id="CHEBI:58088"/>
    </ligand>
</feature>
<feature type="binding site" evidence="1">
    <location>
        <position position="75"/>
    </location>
    <ligand>
        <name>a 1,2-diacyl-sn-glycero-3-phospho-(1D-myo-inositol-3-phosphate)</name>
        <dbReference type="ChEBI" id="CHEBI:58088"/>
    </ligand>
</feature>
<feature type="modified residue" description="Phosphoserine" evidence="2">
    <location>
        <position position="336"/>
    </location>
</feature>
<feature type="modified residue" description="Phosphoserine" evidence="2">
    <location>
        <position position="407"/>
    </location>
</feature>
<feature type="modified residue" description="Phosphoserine" evidence="11 12">
    <location>
        <position position="409"/>
    </location>
</feature>
<feature type="modified residue" description="Phosphoserine" evidence="12">
    <location>
        <position position="415"/>
    </location>
</feature>
<feature type="modified residue" description="Phosphoserine" evidence="11 12">
    <location>
        <position position="421"/>
    </location>
</feature>
<feature type="modified residue" description="Phosphoserine" evidence="2">
    <location>
        <position position="437"/>
    </location>
</feature>
<feature type="modified residue" description="Phosphoserine" evidence="2">
    <location>
        <position position="440"/>
    </location>
</feature>
<feature type="sequence conflict" description="In Ref. 1; BAC37004." evidence="10" ref="1">
    <original>K</original>
    <variation>E</variation>
    <location>
        <position position="198"/>
    </location>
</feature>
<accession>Q8BVL3</accession>
<accession>Q8R0N8</accession>
<sequence length="470" mass="52797">MHFSIPETESRSGDSGGSAYVAYNIHVNGVLHCRVRYSQLLGLHEQLRKEYGANVVPAFPPKKLFSLTPAEVEQRREQLEKYMQAVRQDPLLGSSETFNSFLRRAQQETQQVPTEEVSLEVLLSNGQKVLVTVLTSDQTEDVLEAVAAKLDLPDDLIGYFSLFLVREKEDGAFSFVRKLQEFELPYVSVTSLRSQEYKIVLRKSYWDSAYDDDVMENRVGLNLLYAQTVSDIEHGWILVTKEQHRQLKSLQEKVSKKEFLRLAQTLRHYGYLRFDACVADFPEKDCPVVVSAGNSELSLQLRLPGQQLREGSFRVTRMRCWRVTSSVPLPSGGTSSPSRGRGEVRLELAFEYLMSKDRLQWVTITSPQAIMMSICLQSMVDELMVKKSGGSIRKMLRRRVGGTLRRSDSQQAVKSPPLLESPDASRESMVKLSSKLSAVSLRGIGSPSTDASASAVHGNFAFEGIGDEDL</sequence>
<proteinExistence type="evidence at protein level"/>
<reference key="1">
    <citation type="journal article" date="2005" name="Science">
        <title>The transcriptional landscape of the mammalian genome.</title>
        <authorList>
            <person name="Carninci P."/>
            <person name="Kasukawa T."/>
            <person name="Katayama S."/>
            <person name="Gough J."/>
            <person name="Frith M.C."/>
            <person name="Maeda N."/>
            <person name="Oyama R."/>
            <person name="Ravasi T."/>
            <person name="Lenhard B."/>
            <person name="Wells C."/>
            <person name="Kodzius R."/>
            <person name="Shimokawa K."/>
            <person name="Bajic V.B."/>
            <person name="Brenner S.E."/>
            <person name="Batalov S."/>
            <person name="Forrest A.R."/>
            <person name="Zavolan M."/>
            <person name="Davis M.J."/>
            <person name="Wilming L.G."/>
            <person name="Aidinis V."/>
            <person name="Allen J.E."/>
            <person name="Ambesi-Impiombato A."/>
            <person name="Apweiler R."/>
            <person name="Aturaliya R.N."/>
            <person name="Bailey T.L."/>
            <person name="Bansal M."/>
            <person name="Baxter L."/>
            <person name="Beisel K.W."/>
            <person name="Bersano T."/>
            <person name="Bono H."/>
            <person name="Chalk A.M."/>
            <person name="Chiu K.P."/>
            <person name="Choudhary V."/>
            <person name="Christoffels A."/>
            <person name="Clutterbuck D.R."/>
            <person name="Crowe M.L."/>
            <person name="Dalla E."/>
            <person name="Dalrymple B.P."/>
            <person name="de Bono B."/>
            <person name="Della Gatta G."/>
            <person name="di Bernardo D."/>
            <person name="Down T."/>
            <person name="Engstrom P."/>
            <person name="Fagiolini M."/>
            <person name="Faulkner G."/>
            <person name="Fletcher C.F."/>
            <person name="Fukushima T."/>
            <person name="Furuno M."/>
            <person name="Futaki S."/>
            <person name="Gariboldi M."/>
            <person name="Georgii-Hemming P."/>
            <person name="Gingeras T.R."/>
            <person name="Gojobori T."/>
            <person name="Green R.E."/>
            <person name="Gustincich S."/>
            <person name="Harbers M."/>
            <person name="Hayashi Y."/>
            <person name="Hensch T.K."/>
            <person name="Hirokawa N."/>
            <person name="Hill D."/>
            <person name="Huminiecki L."/>
            <person name="Iacono M."/>
            <person name="Ikeo K."/>
            <person name="Iwama A."/>
            <person name="Ishikawa T."/>
            <person name="Jakt M."/>
            <person name="Kanapin A."/>
            <person name="Katoh M."/>
            <person name="Kawasawa Y."/>
            <person name="Kelso J."/>
            <person name="Kitamura H."/>
            <person name="Kitano H."/>
            <person name="Kollias G."/>
            <person name="Krishnan S.P."/>
            <person name="Kruger A."/>
            <person name="Kummerfeld S.K."/>
            <person name="Kurochkin I.V."/>
            <person name="Lareau L.F."/>
            <person name="Lazarevic D."/>
            <person name="Lipovich L."/>
            <person name="Liu J."/>
            <person name="Liuni S."/>
            <person name="McWilliam S."/>
            <person name="Madan Babu M."/>
            <person name="Madera M."/>
            <person name="Marchionni L."/>
            <person name="Matsuda H."/>
            <person name="Matsuzawa S."/>
            <person name="Miki H."/>
            <person name="Mignone F."/>
            <person name="Miyake S."/>
            <person name="Morris K."/>
            <person name="Mottagui-Tabar S."/>
            <person name="Mulder N."/>
            <person name="Nakano N."/>
            <person name="Nakauchi H."/>
            <person name="Ng P."/>
            <person name="Nilsson R."/>
            <person name="Nishiguchi S."/>
            <person name="Nishikawa S."/>
            <person name="Nori F."/>
            <person name="Ohara O."/>
            <person name="Okazaki Y."/>
            <person name="Orlando V."/>
            <person name="Pang K.C."/>
            <person name="Pavan W.J."/>
            <person name="Pavesi G."/>
            <person name="Pesole G."/>
            <person name="Petrovsky N."/>
            <person name="Piazza S."/>
            <person name="Reed J."/>
            <person name="Reid J.F."/>
            <person name="Ring B.Z."/>
            <person name="Ringwald M."/>
            <person name="Rost B."/>
            <person name="Ruan Y."/>
            <person name="Salzberg S.L."/>
            <person name="Sandelin A."/>
            <person name="Schneider C."/>
            <person name="Schoenbach C."/>
            <person name="Sekiguchi K."/>
            <person name="Semple C.A."/>
            <person name="Seno S."/>
            <person name="Sessa L."/>
            <person name="Sheng Y."/>
            <person name="Shibata Y."/>
            <person name="Shimada H."/>
            <person name="Shimada K."/>
            <person name="Silva D."/>
            <person name="Sinclair B."/>
            <person name="Sperling S."/>
            <person name="Stupka E."/>
            <person name="Sugiura K."/>
            <person name="Sultana R."/>
            <person name="Takenaka Y."/>
            <person name="Taki K."/>
            <person name="Tammoja K."/>
            <person name="Tan S.L."/>
            <person name="Tang S."/>
            <person name="Taylor M.S."/>
            <person name="Tegner J."/>
            <person name="Teichmann S.A."/>
            <person name="Ueda H.R."/>
            <person name="van Nimwegen E."/>
            <person name="Verardo R."/>
            <person name="Wei C.L."/>
            <person name="Yagi K."/>
            <person name="Yamanishi H."/>
            <person name="Zabarovsky E."/>
            <person name="Zhu S."/>
            <person name="Zimmer A."/>
            <person name="Hide W."/>
            <person name="Bult C."/>
            <person name="Grimmond S.M."/>
            <person name="Teasdale R.D."/>
            <person name="Liu E.T."/>
            <person name="Brusic V."/>
            <person name="Quackenbush J."/>
            <person name="Wahlestedt C."/>
            <person name="Mattick J.S."/>
            <person name="Hume D.A."/>
            <person name="Kai C."/>
            <person name="Sasaki D."/>
            <person name="Tomaru Y."/>
            <person name="Fukuda S."/>
            <person name="Kanamori-Katayama M."/>
            <person name="Suzuki M."/>
            <person name="Aoki J."/>
            <person name="Arakawa T."/>
            <person name="Iida J."/>
            <person name="Imamura K."/>
            <person name="Itoh M."/>
            <person name="Kato T."/>
            <person name="Kawaji H."/>
            <person name="Kawagashira N."/>
            <person name="Kawashima T."/>
            <person name="Kojima M."/>
            <person name="Kondo S."/>
            <person name="Konno H."/>
            <person name="Nakano K."/>
            <person name="Ninomiya N."/>
            <person name="Nishio T."/>
            <person name="Okada M."/>
            <person name="Plessy C."/>
            <person name="Shibata K."/>
            <person name="Shiraki T."/>
            <person name="Suzuki S."/>
            <person name="Tagami M."/>
            <person name="Waki K."/>
            <person name="Watahiki A."/>
            <person name="Okamura-Oho Y."/>
            <person name="Suzuki H."/>
            <person name="Kawai J."/>
            <person name="Hayashizaki Y."/>
        </authorList>
    </citation>
    <scope>NUCLEOTIDE SEQUENCE [LARGE SCALE MRNA]</scope>
    <source>
        <strain>C57BL/6J</strain>
        <strain>NOD</strain>
        <tissue>Spleen</tissue>
        <tissue>Thymus</tissue>
    </source>
</reference>
<reference key="2">
    <citation type="journal article" date="2004" name="Genome Res.">
        <title>The status, quality, and expansion of the NIH full-length cDNA project: the Mammalian Gene Collection (MGC).</title>
        <authorList>
            <consortium name="The MGC Project Team"/>
        </authorList>
    </citation>
    <scope>NUCLEOTIDE SEQUENCE [LARGE SCALE MRNA]</scope>
    <source>
        <strain>FVB/N</strain>
        <tissue>Colon</tissue>
        <tissue>Mammary tumor</tissue>
    </source>
</reference>
<reference key="3">
    <citation type="journal article" date="2002" name="EMBO J.">
        <title>The PX-domain protein SNX17 interacts with members of the LDL receptor family and modulates endocytosis of the LDL receptor.</title>
        <authorList>
            <person name="Stockinger W."/>
            <person name="Sailler B."/>
            <person name="Strasser V."/>
            <person name="Recheis B."/>
            <person name="Fasching D."/>
            <person name="Kahr L."/>
            <person name="Schneider W.J."/>
            <person name="Nimpf J."/>
        </authorList>
    </citation>
    <scope>INTERACTION WITH LDLR; VLDLR; LRP1 AND LRP8</scope>
    <scope>SUBCELLULAR LOCATION</scope>
    <scope>TISSUE SPECIFICITY</scope>
    <scope>FUNCTION</scope>
</reference>
<reference key="4">
    <citation type="journal article" date="2005" name="EMBO J.">
        <title>Sorting nexin 17 facilitates LRP recycling in the early endosome.</title>
        <authorList>
            <person name="van Kerkhof P."/>
            <person name="Lee J."/>
            <person name="McCormick L."/>
            <person name="Tetrault E."/>
            <person name="Lu W."/>
            <person name="Schoenfish M."/>
            <person name="Oorschot V."/>
            <person name="Strous G.J."/>
            <person name="Klumperman J."/>
            <person name="Bu G."/>
        </authorList>
    </citation>
    <scope>INTERACTION WITH LRP1</scope>
    <scope>SUBCELLULAR LOCATION</scope>
    <scope>FUNCTION</scope>
</reference>
<reference key="5">
    <citation type="journal article" date="2008" name="J. Biol. Chem.">
        <title>Adaptor protein sorting nexin 17 regulates amyloid precursor protein trafficking and processing in the early endosomes.</title>
        <authorList>
            <person name="Lee J."/>
            <person name="Retamal C."/>
            <person name="Cuitino L."/>
            <person name="Caruano-Yzermans A."/>
            <person name="Shin J.E."/>
            <person name="van Kerkhof P."/>
            <person name="Marzolo M.P."/>
            <person name="Bu G."/>
        </authorList>
    </citation>
    <scope>FUNCTION</scope>
    <scope>SUBCELLULAR LOCATION</scope>
    <scope>INTERACTION WITH APP</scope>
    <scope>TISSUE SPECIFICITY</scope>
</reference>
<reference key="6">
    <citation type="journal article" date="2008" name="Korean J. Physiol. Pharmacol.">
        <title>Sorting nexin 17 interacts directly with kinesin superfamily KIF1Bbeta protein.</title>
        <authorList>
            <person name="Seog D.H."/>
            <person name="Han J."/>
        </authorList>
    </citation>
    <scope>INTERACTION WITH KIF1B</scope>
</reference>
<reference key="7">
    <citation type="journal article" date="2009" name="Immunity">
        <title>The phagosomal proteome in interferon-gamma-activated macrophages.</title>
        <authorList>
            <person name="Trost M."/>
            <person name="English L."/>
            <person name="Lemieux S."/>
            <person name="Courcelles M."/>
            <person name="Desjardins M."/>
            <person name="Thibault P."/>
        </authorList>
    </citation>
    <scope>PHOSPHORYLATION [LARGE SCALE ANALYSIS] AT SER-409 AND SER-421</scope>
    <scope>IDENTIFICATION BY MASS SPECTROMETRY [LARGE SCALE ANALYSIS]</scope>
</reference>
<reference key="8">
    <citation type="journal article" date="2010" name="Cell">
        <title>A tissue-specific atlas of mouse protein phosphorylation and expression.</title>
        <authorList>
            <person name="Huttlin E.L."/>
            <person name="Jedrychowski M.P."/>
            <person name="Elias J.E."/>
            <person name="Goswami T."/>
            <person name="Rad R."/>
            <person name="Beausoleil S.A."/>
            <person name="Villen J."/>
            <person name="Haas W."/>
            <person name="Sowa M.E."/>
            <person name="Gygi S.P."/>
        </authorList>
    </citation>
    <scope>PHOSPHORYLATION [LARGE SCALE ANALYSIS] AT SER-409; SER-415 AND SER-421</scope>
    <scope>IDENTIFICATION BY MASS SPECTROMETRY [LARGE SCALE ANALYSIS]</scope>
    <source>
        <tissue>Brain</tissue>
        <tissue>Kidney</tissue>
        <tissue>Pancreas</tissue>
        <tissue>Spleen</tissue>
        <tissue>Testis</tissue>
    </source>
</reference>
<protein>
    <recommendedName>
        <fullName>Sorting nexin-17</fullName>
    </recommendedName>
</protein>